<gene>
    <name evidence="2" type="primary">tuf</name>
    <name type="ordered locus">BbuZS7_0487</name>
</gene>
<reference key="1">
    <citation type="journal article" date="2011" name="J. Bacteriol.">
        <title>Whole-genome sequences of thirteen isolates of Borrelia burgdorferi.</title>
        <authorList>
            <person name="Schutzer S.E."/>
            <person name="Fraser-Liggett C.M."/>
            <person name="Casjens S.R."/>
            <person name="Qiu W.G."/>
            <person name="Dunn J.J."/>
            <person name="Mongodin E.F."/>
            <person name="Luft B.J."/>
        </authorList>
    </citation>
    <scope>NUCLEOTIDE SEQUENCE [LARGE SCALE GENOMIC DNA]</scope>
    <source>
        <strain>ZS7</strain>
    </source>
</reference>
<accession>B7J241</accession>
<protein>
    <recommendedName>
        <fullName evidence="2">Elongation factor Tu</fullName>
        <shortName evidence="2">EF-Tu</shortName>
        <ecNumber evidence="2">3.6.5.3</ecNumber>
    </recommendedName>
</protein>
<comment type="function">
    <text evidence="2">GTP hydrolase that promotes the GTP-dependent binding of aminoacyl-tRNA to the A-site of ribosomes during protein biosynthesis.</text>
</comment>
<comment type="catalytic activity">
    <reaction evidence="2">
        <text>GTP + H2O = GDP + phosphate + H(+)</text>
        <dbReference type="Rhea" id="RHEA:19669"/>
        <dbReference type="ChEBI" id="CHEBI:15377"/>
        <dbReference type="ChEBI" id="CHEBI:15378"/>
        <dbReference type="ChEBI" id="CHEBI:37565"/>
        <dbReference type="ChEBI" id="CHEBI:43474"/>
        <dbReference type="ChEBI" id="CHEBI:58189"/>
        <dbReference type="EC" id="3.6.5.3"/>
    </reaction>
    <physiologicalReaction direction="left-to-right" evidence="2">
        <dbReference type="Rhea" id="RHEA:19670"/>
    </physiologicalReaction>
</comment>
<comment type="subunit">
    <text evidence="2">Monomer.</text>
</comment>
<comment type="subcellular location">
    <subcellularLocation>
        <location evidence="2">Cytoplasm</location>
    </subcellularLocation>
</comment>
<comment type="similarity">
    <text evidence="2">Belongs to the TRAFAC class translation factor GTPase superfamily. Classic translation factor GTPase family. EF-Tu/EF-1A subfamily.</text>
</comment>
<proteinExistence type="inferred from homology"/>
<evidence type="ECO:0000250" key="1"/>
<evidence type="ECO:0000255" key="2">
    <source>
        <dbReference type="HAMAP-Rule" id="MF_00118"/>
    </source>
</evidence>
<name>EFTU_BORBZ</name>
<keyword id="KW-0963">Cytoplasm</keyword>
<keyword id="KW-0251">Elongation factor</keyword>
<keyword id="KW-0342">GTP-binding</keyword>
<keyword id="KW-0378">Hydrolase</keyword>
<keyword id="KW-0460">Magnesium</keyword>
<keyword id="KW-0479">Metal-binding</keyword>
<keyword id="KW-0547">Nucleotide-binding</keyword>
<keyword id="KW-0648">Protein biosynthesis</keyword>
<feature type="chain" id="PRO_1000201389" description="Elongation factor Tu">
    <location>
        <begin position="1"/>
        <end position="394"/>
    </location>
</feature>
<feature type="domain" description="tr-type G">
    <location>
        <begin position="10"/>
        <end position="205"/>
    </location>
</feature>
<feature type="region of interest" description="G1" evidence="1">
    <location>
        <begin position="19"/>
        <end position="26"/>
    </location>
</feature>
<feature type="region of interest" description="G2" evidence="1">
    <location>
        <begin position="61"/>
        <end position="65"/>
    </location>
</feature>
<feature type="region of interest" description="G3" evidence="1">
    <location>
        <begin position="82"/>
        <end position="85"/>
    </location>
</feature>
<feature type="region of interest" description="G4" evidence="1">
    <location>
        <begin position="137"/>
        <end position="140"/>
    </location>
</feature>
<feature type="region of interest" description="G5" evidence="1">
    <location>
        <begin position="173"/>
        <end position="175"/>
    </location>
</feature>
<feature type="binding site" evidence="2">
    <location>
        <begin position="19"/>
        <end position="26"/>
    </location>
    <ligand>
        <name>GTP</name>
        <dbReference type="ChEBI" id="CHEBI:37565"/>
    </ligand>
</feature>
<feature type="binding site" evidence="2">
    <location>
        <position position="26"/>
    </location>
    <ligand>
        <name>Mg(2+)</name>
        <dbReference type="ChEBI" id="CHEBI:18420"/>
    </ligand>
</feature>
<feature type="binding site" evidence="2">
    <location>
        <begin position="82"/>
        <end position="86"/>
    </location>
    <ligand>
        <name>GTP</name>
        <dbReference type="ChEBI" id="CHEBI:37565"/>
    </ligand>
</feature>
<feature type="binding site" evidence="2">
    <location>
        <begin position="137"/>
        <end position="140"/>
    </location>
    <ligand>
        <name>GTP</name>
        <dbReference type="ChEBI" id="CHEBI:37565"/>
    </ligand>
</feature>
<sequence>MAKEVFQRTKPHMNVGTIGHVDHGKTTLTAAISIYCSKLNKDAKALKYEDIDNAPEEKARGITINARHIEYETANRHYAHVDCPGHADYIKNMITGAAQMDAAILLVAADSGAEPQTKEHLLLAQRMGIKKIIVFLNKLDLADPELVELVEVEVLELVEKYGFSADTPIIKGSAFGAMSNPEDPESTKCVKELLESMDNYFDLPERDIDKPFLLAVEDVFSISGRGTVATGRIERGIIKVGQEVEIVGIKETRKTTVTGVEMFQKILEQGQAGDNVGLLLRGVDKKDIERGQVLSAPGTITPHKKFKASIYCLTKEEGGRHKPFFPGYRPQFFFRTTDVTGVVALEGKEMVMPGDNVDIIVELISSIAMDKNVEFAVREGGRTVASGRILEILE</sequence>
<organism>
    <name type="scientific">Borreliella burgdorferi (strain ZS7)</name>
    <name type="common">Borrelia burgdorferi</name>
    <dbReference type="NCBI Taxonomy" id="445985"/>
    <lineage>
        <taxon>Bacteria</taxon>
        <taxon>Pseudomonadati</taxon>
        <taxon>Spirochaetota</taxon>
        <taxon>Spirochaetia</taxon>
        <taxon>Spirochaetales</taxon>
        <taxon>Borreliaceae</taxon>
        <taxon>Borreliella</taxon>
    </lineage>
</organism>
<dbReference type="EC" id="3.6.5.3" evidence="2"/>
<dbReference type="EMBL" id="CP001205">
    <property type="protein sequence ID" value="ACK75193.1"/>
    <property type="molecule type" value="Genomic_DNA"/>
</dbReference>
<dbReference type="RefSeq" id="WP_002657015.1">
    <property type="nucleotide sequence ID" value="NC_011728.1"/>
</dbReference>
<dbReference type="SMR" id="B7J241"/>
<dbReference type="GeneID" id="56567911"/>
<dbReference type="KEGG" id="bbz:BbuZS7_0487"/>
<dbReference type="HOGENOM" id="CLU_007265_0_0_12"/>
<dbReference type="Proteomes" id="UP000006901">
    <property type="component" value="Chromosome"/>
</dbReference>
<dbReference type="GO" id="GO:0005737">
    <property type="term" value="C:cytoplasm"/>
    <property type="evidence" value="ECO:0007669"/>
    <property type="project" value="UniProtKB-SubCell"/>
</dbReference>
<dbReference type="GO" id="GO:0005525">
    <property type="term" value="F:GTP binding"/>
    <property type="evidence" value="ECO:0007669"/>
    <property type="project" value="UniProtKB-UniRule"/>
</dbReference>
<dbReference type="GO" id="GO:0003924">
    <property type="term" value="F:GTPase activity"/>
    <property type="evidence" value="ECO:0007669"/>
    <property type="project" value="InterPro"/>
</dbReference>
<dbReference type="GO" id="GO:0003746">
    <property type="term" value="F:translation elongation factor activity"/>
    <property type="evidence" value="ECO:0007669"/>
    <property type="project" value="UniProtKB-UniRule"/>
</dbReference>
<dbReference type="CDD" id="cd01884">
    <property type="entry name" value="EF_Tu"/>
    <property type="match status" value="1"/>
</dbReference>
<dbReference type="CDD" id="cd03697">
    <property type="entry name" value="EFTU_II"/>
    <property type="match status" value="1"/>
</dbReference>
<dbReference type="CDD" id="cd03707">
    <property type="entry name" value="EFTU_III"/>
    <property type="match status" value="1"/>
</dbReference>
<dbReference type="FunFam" id="2.40.30.10:FF:000001">
    <property type="entry name" value="Elongation factor Tu"/>
    <property type="match status" value="1"/>
</dbReference>
<dbReference type="FunFam" id="3.40.50.300:FF:000576">
    <property type="entry name" value="Elongation factor Tu"/>
    <property type="match status" value="1"/>
</dbReference>
<dbReference type="Gene3D" id="3.40.50.300">
    <property type="entry name" value="P-loop containing nucleotide triphosphate hydrolases"/>
    <property type="match status" value="1"/>
</dbReference>
<dbReference type="Gene3D" id="2.40.30.10">
    <property type="entry name" value="Translation factors"/>
    <property type="match status" value="2"/>
</dbReference>
<dbReference type="HAMAP" id="MF_00118_B">
    <property type="entry name" value="EF_Tu_B"/>
    <property type="match status" value="1"/>
</dbReference>
<dbReference type="InterPro" id="IPR041709">
    <property type="entry name" value="EF-Tu_GTP-bd"/>
</dbReference>
<dbReference type="InterPro" id="IPR050055">
    <property type="entry name" value="EF-Tu_GTPase"/>
</dbReference>
<dbReference type="InterPro" id="IPR004161">
    <property type="entry name" value="EFTu-like_2"/>
</dbReference>
<dbReference type="InterPro" id="IPR033720">
    <property type="entry name" value="EFTU_2"/>
</dbReference>
<dbReference type="InterPro" id="IPR031157">
    <property type="entry name" value="G_TR_CS"/>
</dbReference>
<dbReference type="InterPro" id="IPR027417">
    <property type="entry name" value="P-loop_NTPase"/>
</dbReference>
<dbReference type="InterPro" id="IPR005225">
    <property type="entry name" value="Small_GTP-bd"/>
</dbReference>
<dbReference type="InterPro" id="IPR000795">
    <property type="entry name" value="T_Tr_GTP-bd_dom"/>
</dbReference>
<dbReference type="InterPro" id="IPR009000">
    <property type="entry name" value="Transl_B-barrel_sf"/>
</dbReference>
<dbReference type="InterPro" id="IPR009001">
    <property type="entry name" value="Transl_elong_EF1A/Init_IF2_C"/>
</dbReference>
<dbReference type="InterPro" id="IPR004541">
    <property type="entry name" value="Transl_elong_EFTu/EF1A_bac/org"/>
</dbReference>
<dbReference type="InterPro" id="IPR004160">
    <property type="entry name" value="Transl_elong_EFTu/EF1A_C"/>
</dbReference>
<dbReference type="NCBIfam" id="TIGR00485">
    <property type="entry name" value="EF-Tu"/>
    <property type="match status" value="1"/>
</dbReference>
<dbReference type="NCBIfam" id="NF000766">
    <property type="entry name" value="PRK00049.1"/>
    <property type="match status" value="1"/>
</dbReference>
<dbReference type="NCBIfam" id="NF009372">
    <property type="entry name" value="PRK12735.1"/>
    <property type="match status" value="1"/>
</dbReference>
<dbReference type="NCBIfam" id="NF009373">
    <property type="entry name" value="PRK12736.1"/>
    <property type="match status" value="1"/>
</dbReference>
<dbReference type="NCBIfam" id="TIGR00231">
    <property type="entry name" value="small_GTP"/>
    <property type="match status" value="1"/>
</dbReference>
<dbReference type="PANTHER" id="PTHR43721:SF22">
    <property type="entry name" value="ELONGATION FACTOR TU, MITOCHONDRIAL"/>
    <property type="match status" value="1"/>
</dbReference>
<dbReference type="PANTHER" id="PTHR43721">
    <property type="entry name" value="ELONGATION FACTOR TU-RELATED"/>
    <property type="match status" value="1"/>
</dbReference>
<dbReference type="Pfam" id="PF00009">
    <property type="entry name" value="GTP_EFTU"/>
    <property type="match status" value="1"/>
</dbReference>
<dbReference type="Pfam" id="PF03144">
    <property type="entry name" value="GTP_EFTU_D2"/>
    <property type="match status" value="1"/>
</dbReference>
<dbReference type="Pfam" id="PF03143">
    <property type="entry name" value="GTP_EFTU_D3"/>
    <property type="match status" value="1"/>
</dbReference>
<dbReference type="PRINTS" id="PR00315">
    <property type="entry name" value="ELONGATNFCT"/>
</dbReference>
<dbReference type="SUPFAM" id="SSF50465">
    <property type="entry name" value="EF-Tu/eEF-1alpha/eIF2-gamma C-terminal domain"/>
    <property type="match status" value="1"/>
</dbReference>
<dbReference type="SUPFAM" id="SSF52540">
    <property type="entry name" value="P-loop containing nucleoside triphosphate hydrolases"/>
    <property type="match status" value="1"/>
</dbReference>
<dbReference type="SUPFAM" id="SSF50447">
    <property type="entry name" value="Translation proteins"/>
    <property type="match status" value="1"/>
</dbReference>
<dbReference type="PROSITE" id="PS00301">
    <property type="entry name" value="G_TR_1"/>
    <property type="match status" value="1"/>
</dbReference>
<dbReference type="PROSITE" id="PS51722">
    <property type="entry name" value="G_TR_2"/>
    <property type="match status" value="1"/>
</dbReference>